<name>YQGF_MYCS2</name>
<reference key="1">
    <citation type="submission" date="2006-10" db="EMBL/GenBank/DDBJ databases">
        <authorList>
            <person name="Fleischmann R.D."/>
            <person name="Dodson R.J."/>
            <person name="Haft D.H."/>
            <person name="Merkel J.S."/>
            <person name="Nelson W.C."/>
            <person name="Fraser C.M."/>
        </authorList>
    </citation>
    <scope>NUCLEOTIDE SEQUENCE [LARGE SCALE GENOMIC DNA]</scope>
    <source>
        <strain>ATCC 700084 / mc(2)155</strain>
    </source>
</reference>
<reference key="2">
    <citation type="journal article" date="2007" name="Genome Biol.">
        <title>Interrupted coding sequences in Mycobacterium smegmatis: authentic mutations or sequencing errors?</title>
        <authorList>
            <person name="Deshayes C."/>
            <person name="Perrodou E."/>
            <person name="Gallien S."/>
            <person name="Euphrasie D."/>
            <person name="Schaeffer C."/>
            <person name="Van-Dorsselaer A."/>
            <person name="Poch O."/>
            <person name="Lecompte O."/>
            <person name="Reyrat J.-M."/>
        </authorList>
    </citation>
    <scope>NUCLEOTIDE SEQUENCE [LARGE SCALE GENOMIC DNA]</scope>
    <source>
        <strain>ATCC 700084 / mc(2)155</strain>
    </source>
</reference>
<reference key="3">
    <citation type="journal article" date="2009" name="Genome Res.">
        <title>Ortho-proteogenomics: multiple proteomes investigation through orthology and a new MS-based protocol.</title>
        <authorList>
            <person name="Gallien S."/>
            <person name="Perrodou E."/>
            <person name="Carapito C."/>
            <person name="Deshayes C."/>
            <person name="Reyrat J.-M."/>
            <person name="Van Dorsselaer A."/>
            <person name="Poch O."/>
            <person name="Schaeffer C."/>
            <person name="Lecompte O."/>
        </authorList>
    </citation>
    <scope>NUCLEOTIDE SEQUENCE [LARGE SCALE GENOMIC DNA]</scope>
    <source>
        <strain>ATCC 700084 / mc(2)155</strain>
    </source>
</reference>
<comment type="function">
    <text evidence="1">Could be a nuclease involved in processing of the 5'-end of pre-16S rRNA.</text>
</comment>
<comment type="subcellular location">
    <subcellularLocation>
        <location evidence="1">Cytoplasm</location>
    </subcellularLocation>
</comment>
<comment type="similarity">
    <text evidence="1">Belongs to the YqgF nuclease family.</text>
</comment>
<protein>
    <recommendedName>
        <fullName evidence="1">Putative pre-16S rRNA nuclease</fullName>
        <ecNumber evidence="1">3.1.-.-</ecNumber>
    </recommendedName>
</protein>
<dbReference type="EC" id="3.1.-.-" evidence="1"/>
<dbReference type="EMBL" id="CP000480">
    <property type="protein sequence ID" value="ABK73002.1"/>
    <property type="molecule type" value="Genomic_DNA"/>
</dbReference>
<dbReference type="EMBL" id="CP001663">
    <property type="protein sequence ID" value="AFP39415.1"/>
    <property type="molecule type" value="Genomic_DNA"/>
</dbReference>
<dbReference type="RefSeq" id="YP_887343.1">
    <property type="nucleotide sequence ID" value="NC_008596.1"/>
</dbReference>
<dbReference type="SMR" id="A0QWQ5"/>
<dbReference type="STRING" id="246196.MSMEG_3026"/>
<dbReference type="PaxDb" id="246196-MSMEI_2951"/>
<dbReference type="KEGG" id="msb:LJ00_15060"/>
<dbReference type="KEGG" id="msg:MSMEI_2951"/>
<dbReference type="KEGG" id="msm:MSMEG_3026"/>
<dbReference type="PATRIC" id="fig|246196.19.peg.2988"/>
<dbReference type="eggNOG" id="COG0816">
    <property type="taxonomic scope" value="Bacteria"/>
</dbReference>
<dbReference type="OrthoDB" id="9790539at2"/>
<dbReference type="Proteomes" id="UP000000757">
    <property type="component" value="Chromosome"/>
</dbReference>
<dbReference type="Proteomes" id="UP000006158">
    <property type="component" value="Chromosome"/>
</dbReference>
<dbReference type="GO" id="GO:0005829">
    <property type="term" value="C:cytosol"/>
    <property type="evidence" value="ECO:0007669"/>
    <property type="project" value="TreeGrafter"/>
</dbReference>
<dbReference type="GO" id="GO:0004518">
    <property type="term" value="F:nuclease activity"/>
    <property type="evidence" value="ECO:0007669"/>
    <property type="project" value="UniProtKB-KW"/>
</dbReference>
<dbReference type="GO" id="GO:0000967">
    <property type="term" value="P:rRNA 5'-end processing"/>
    <property type="evidence" value="ECO:0007669"/>
    <property type="project" value="UniProtKB-UniRule"/>
</dbReference>
<dbReference type="CDD" id="cd16964">
    <property type="entry name" value="YqgF"/>
    <property type="match status" value="1"/>
</dbReference>
<dbReference type="FunFam" id="3.30.420.140:FF:000005">
    <property type="entry name" value="Putative pre-16S rRNA nuclease"/>
    <property type="match status" value="1"/>
</dbReference>
<dbReference type="Gene3D" id="3.30.420.140">
    <property type="entry name" value="YqgF/RNase H-like domain"/>
    <property type="match status" value="1"/>
</dbReference>
<dbReference type="HAMAP" id="MF_00651">
    <property type="entry name" value="Nuclease_YqgF"/>
    <property type="match status" value="1"/>
</dbReference>
<dbReference type="InterPro" id="IPR012337">
    <property type="entry name" value="RNaseH-like_sf"/>
</dbReference>
<dbReference type="InterPro" id="IPR005227">
    <property type="entry name" value="YqgF"/>
</dbReference>
<dbReference type="InterPro" id="IPR006641">
    <property type="entry name" value="YqgF/RNaseH-like_dom"/>
</dbReference>
<dbReference type="InterPro" id="IPR037027">
    <property type="entry name" value="YqgF/RNaseH-like_dom_sf"/>
</dbReference>
<dbReference type="NCBIfam" id="TIGR00250">
    <property type="entry name" value="RNAse_H_YqgF"/>
    <property type="match status" value="1"/>
</dbReference>
<dbReference type="PANTHER" id="PTHR33317">
    <property type="entry name" value="POLYNUCLEOTIDYL TRANSFERASE, RIBONUCLEASE H-LIKE SUPERFAMILY PROTEIN"/>
    <property type="match status" value="1"/>
</dbReference>
<dbReference type="PANTHER" id="PTHR33317:SF4">
    <property type="entry name" value="POLYNUCLEOTIDYL TRANSFERASE, RIBONUCLEASE H-LIKE SUPERFAMILY PROTEIN"/>
    <property type="match status" value="1"/>
</dbReference>
<dbReference type="Pfam" id="PF03652">
    <property type="entry name" value="RuvX"/>
    <property type="match status" value="1"/>
</dbReference>
<dbReference type="SMART" id="SM00732">
    <property type="entry name" value="YqgFc"/>
    <property type="match status" value="1"/>
</dbReference>
<dbReference type="SUPFAM" id="SSF53098">
    <property type="entry name" value="Ribonuclease H-like"/>
    <property type="match status" value="1"/>
</dbReference>
<evidence type="ECO:0000255" key="1">
    <source>
        <dbReference type="HAMAP-Rule" id="MF_00651"/>
    </source>
</evidence>
<evidence type="ECO:0000256" key="2">
    <source>
        <dbReference type="SAM" id="MobiDB-lite"/>
    </source>
</evidence>
<organism>
    <name type="scientific">Mycolicibacterium smegmatis (strain ATCC 700084 / mc(2)155)</name>
    <name type="common">Mycobacterium smegmatis</name>
    <dbReference type="NCBI Taxonomy" id="246196"/>
    <lineage>
        <taxon>Bacteria</taxon>
        <taxon>Bacillati</taxon>
        <taxon>Actinomycetota</taxon>
        <taxon>Actinomycetes</taxon>
        <taxon>Mycobacteriales</taxon>
        <taxon>Mycobacteriaceae</taxon>
        <taxon>Mycolicibacterium</taxon>
    </lineage>
</organism>
<feature type="chain" id="PRO_1000131050" description="Putative pre-16S rRNA nuclease">
    <location>
        <begin position="1"/>
        <end position="170"/>
    </location>
</feature>
<feature type="region of interest" description="Disordered" evidence="2">
    <location>
        <begin position="1"/>
        <end position="22"/>
    </location>
</feature>
<feature type="compositionally biased region" description="Basic and acidic residues" evidence="2">
    <location>
        <begin position="1"/>
        <end position="18"/>
    </location>
</feature>
<gene>
    <name type="ordered locus">MSMEG_3026</name>
    <name type="ordered locus">MSMEI_2951</name>
</gene>
<sequence>MGTDDRLPDRPGADDPGRGRRIGIDVGTVRIGVASSDPDGILATPVETVARDKRDKTGKHVRRLAALVKEYEAVEVIVGLPRTLGDRASASAHDAVDVAEQLARRIAPTPVRLADERLTTVSAQRSLREAGVRARGQKAVIDQVAAVGILQGWLDQRRAALAARREGTDG</sequence>
<proteinExistence type="inferred from homology"/>
<accession>A0QWQ5</accession>
<accession>I7FD52</accession>
<keyword id="KW-0963">Cytoplasm</keyword>
<keyword id="KW-0378">Hydrolase</keyword>
<keyword id="KW-0540">Nuclease</keyword>
<keyword id="KW-1185">Reference proteome</keyword>
<keyword id="KW-0690">Ribosome biogenesis</keyword>